<feature type="chain" id="PRO_1000191297" description="Cell division topological specificity factor">
    <location>
        <begin position="1"/>
        <end position="86"/>
    </location>
</feature>
<name>MINE_SHEPW</name>
<evidence type="ECO:0000255" key="1">
    <source>
        <dbReference type="HAMAP-Rule" id="MF_00262"/>
    </source>
</evidence>
<keyword id="KW-0131">Cell cycle</keyword>
<keyword id="KW-0132">Cell division</keyword>
<sequence length="86" mass="9832">MSLLDYFKTKKKPSTAATAKERLQIIVAHQRGERDAPDYFPQMKQEIIEVIRKYVKVGADQVSVQLDQNDDNLSVLELNVTLPEQS</sequence>
<gene>
    <name evidence="1" type="primary">minE</name>
    <name type="ordered locus">swp_2291</name>
</gene>
<dbReference type="EMBL" id="CP000472">
    <property type="protein sequence ID" value="ACJ29037.1"/>
    <property type="molecule type" value="Genomic_DNA"/>
</dbReference>
<dbReference type="RefSeq" id="WP_020912397.1">
    <property type="nucleotide sequence ID" value="NC_011566.1"/>
</dbReference>
<dbReference type="SMR" id="B8CNR8"/>
<dbReference type="STRING" id="225849.swp_2291"/>
<dbReference type="KEGG" id="swp:swp_2291"/>
<dbReference type="eggNOG" id="COG0851">
    <property type="taxonomic scope" value="Bacteria"/>
</dbReference>
<dbReference type="HOGENOM" id="CLU_137929_2_2_6"/>
<dbReference type="OrthoDB" id="9802655at2"/>
<dbReference type="Proteomes" id="UP000000753">
    <property type="component" value="Chromosome"/>
</dbReference>
<dbReference type="GO" id="GO:0051301">
    <property type="term" value="P:cell division"/>
    <property type="evidence" value="ECO:0007669"/>
    <property type="project" value="UniProtKB-KW"/>
</dbReference>
<dbReference type="GO" id="GO:0032955">
    <property type="term" value="P:regulation of division septum assembly"/>
    <property type="evidence" value="ECO:0007669"/>
    <property type="project" value="InterPro"/>
</dbReference>
<dbReference type="FunFam" id="3.30.1070.10:FF:000001">
    <property type="entry name" value="Cell division topological specificity factor"/>
    <property type="match status" value="1"/>
</dbReference>
<dbReference type="Gene3D" id="3.30.1070.10">
    <property type="entry name" value="Cell division topological specificity factor MinE"/>
    <property type="match status" value="1"/>
</dbReference>
<dbReference type="HAMAP" id="MF_00262">
    <property type="entry name" value="MinE"/>
    <property type="match status" value="1"/>
</dbReference>
<dbReference type="InterPro" id="IPR005527">
    <property type="entry name" value="MinE"/>
</dbReference>
<dbReference type="InterPro" id="IPR036707">
    <property type="entry name" value="MinE_sf"/>
</dbReference>
<dbReference type="NCBIfam" id="TIGR01215">
    <property type="entry name" value="minE"/>
    <property type="match status" value="1"/>
</dbReference>
<dbReference type="NCBIfam" id="NF001422">
    <property type="entry name" value="PRK00296.1"/>
    <property type="match status" value="1"/>
</dbReference>
<dbReference type="Pfam" id="PF03776">
    <property type="entry name" value="MinE"/>
    <property type="match status" value="1"/>
</dbReference>
<dbReference type="SUPFAM" id="SSF55229">
    <property type="entry name" value="Cell division protein MinE topological specificity domain"/>
    <property type="match status" value="1"/>
</dbReference>
<comment type="function">
    <text evidence="1">Prevents the cell division inhibition by proteins MinC and MinD at internal division sites while permitting inhibition at polar sites. This ensures cell division at the proper site by restricting the formation of a division septum at the midpoint of the long axis of the cell.</text>
</comment>
<comment type="similarity">
    <text evidence="1">Belongs to the MinE family.</text>
</comment>
<reference key="1">
    <citation type="journal article" date="2008" name="PLoS ONE">
        <title>Environmental adaptation: genomic analysis of the piezotolerant and psychrotolerant deep-sea iron reducing bacterium Shewanella piezotolerans WP3.</title>
        <authorList>
            <person name="Wang F."/>
            <person name="Wang J."/>
            <person name="Jian H."/>
            <person name="Zhang B."/>
            <person name="Li S."/>
            <person name="Wang F."/>
            <person name="Zeng X."/>
            <person name="Gao L."/>
            <person name="Bartlett D.H."/>
            <person name="Yu J."/>
            <person name="Hu S."/>
            <person name="Xiao X."/>
        </authorList>
    </citation>
    <scope>NUCLEOTIDE SEQUENCE [LARGE SCALE GENOMIC DNA]</scope>
    <source>
        <strain>WP3 / JCM 13877</strain>
    </source>
</reference>
<accession>B8CNR8</accession>
<proteinExistence type="inferred from homology"/>
<organism>
    <name type="scientific">Shewanella piezotolerans (strain WP3 / JCM 13877)</name>
    <dbReference type="NCBI Taxonomy" id="225849"/>
    <lineage>
        <taxon>Bacteria</taxon>
        <taxon>Pseudomonadati</taxon>
        <taxon>Pseudomonadota</taxon>
        <taxon>Gammaproteobacteria</taxon>
        <taxon>Alteromonadales</taxon>
        <taxon>Shewanellaceae</taxon>
        <taxon>Shewanella</taxon>
    </lineage>
</organism>
<protein>
    <recommendedName>
        <fullName evidence="1">Cell division topological specificity factor</fullName>
    </recommendedName>
</protein>